<organism evidence="9">
    <name type="scientific">Yarrowia lipolytica (strain CLIB 122 / E 150)</name>
    <name type="common">Yeast</name>
    <name type="synonym">Candida lipolytica</name>
    <dbReference type="NCBI Taxonomy" id="284591"/>
    <lineage>
        <taxon>Eukaryota</taxon>
        <taxon>Fungi</taxon>
        <taxon>Dikarya</taxon>
        <taxon>Ascomycota</taxon>
        <taxon>Saccharomycotina</taxon>
        <taxon>Dipodascomycetes</taxon>
        <taxon>Dipodascales</taxon>
        <taxon>Dipodascales incertae sedis</taxon>
        <taxon>Yarrowia</taxon>
    </lineage>
</organism>
<reference evidence="9" key="1">
    <citation type="journal article" date="2004" name="Nature">
        <title>Genome evolution in yeasts.</title>
        <authorList>
            <person name="Dujon B."/>
            <person name="Sherman D."/>
            <person name="Fischer G."/>
            <person name="Durrens P."/>
            <person name="Casaregola S."/>
            <person name="Lafontaine I."/>
            <person name="de Montigny J."/>
            <person name="Marck C."/>
            <person name="Neuveglise C."/>
            <person name="Talla E."/>
            <person name="Goffard N."/>
            <person name="Frangeul L."/>
            <person name="Aigle M."/>
            <person name="Anthouard V."/>
            <person name="Babour A."/>
            <person name="Barbe V."/>
            <person name="Barnay S."/>
            <person name="Blanchin S."/>
            <person name="Beckerich J.-M."/>
            <person name="Beyne E."/>
            <person name="Bleykasten C."/>
            <person name="Boisrame A."/>
            <person name="Boyer J."/>
            <person name="Cattolico L."/>
            <person name="Confanioleri F."/>
            <person name="de Daruvar A."/>
            <person name="Despons L."/>
            <person name="Fabre E."/>
            <person name="Fairhead C."/>
            <person name="Ferry-Dumazet H."/>
            <person name="Groppi A."/>
            <person name="Hantraye F."/>
            <person name="Hennequin C."/>
            <person name="Jauniaux N."/>
            <person name="Joyet P."/>
            <person name="Kachouri R."/>
            <person name="Kerrest A."/>
            <person name="Koszul R."/>
            <person name="Lemaire M."/>
            <person name="Lesur I."/>
            <person name="Ma L."/>
            <person name="Muller H."/>
            <person name="Nicaud J.-M."/>
            <person name="Nikolski M."/>
            <person name="Oztas S."/>
            <person name="Ozier-Kalogeropoulos O."/>
            <person name="Pellenz S."/>
            <person name="Potier S."/>
            <person name="Richard G.-F."/>
            <person name="Straub M.-L."/>
            <person name="Suleau A."/>
            <person name="Swennen D."/>
            <person name="Tekaia F."/>
            <person name="Wesolowski-Louvel M."/>
            <person name="Westhof E."/>
            <person name="Wirth B."/>
            <person name="Zeniou-Meyer M."/>
            <person name="Zivanovic Y."/>
            <person name="Bolotin-Fukuhara M."/>
            <person name="Thierry A."/>
            <person name="Bouchier C."/>
            <person name="Caudron B."/>
            <person name="Scarpelli C."/>
            <person name="Gaillardin C."/>
            <person name="Weissenbach J."/>
            <person name="Wincker P."/>
            <person name="Souciet J.-L."/>
        </authorList>
    </citation>
    <scope>NUCLEOTIDE SEQUENCE [LARGE SCALE GENOMIC DNA]</scope>
    <source>
        <strain>CLIB 122 / E 150</strain>
    </source>
</reference>
<reference evidence="6" key="2">
    <citation type="journal article" date="2015" name="Biochem. J.">
        <title>The purification and characterization of ATP synthase complexes from the mitochondria of four fungal species.</title>
        <authorList>
            <person name="Liu S."/>
            <person name="Charlesworth T.J."/>
            <person name="Bason J.V."/>
            <person name="Montgomery M.G."/>
            <person name="Harbour M.E."/>
            <person name="Fearnley I.M."/>
            <person name="Walker J.E."/>
        </authorList>
    </citation>
    <scope>PROTEIN SEQUENCE OF 2-9</scope>
    <scope>IDENTIFICATION IN ATP SYNTHASE COMPLEX</scope>
    <scope>FUNCTION OF ATP SYNTHASE COMPLEX</scope>
    <scope>SUBUNIT</scope>
    <scope>SUBCELLULAR LOCATION</scope>
    <scope>MASS SPECTROMETRY</scope>
    <scope>IDENTIFICATION BY MASS SPECTROMETRY</scope>
    <source>
        <strain evidence="5">CLIB 122 / E 150</strain>
    </source>
</reference>
<reference evidence="6" key="3">
    <citation type="journal article" date="2016" name="Mol. Cell">
        <title>Structure of a Complete ATP Synthase Dimer Reveals the Molecular Basis of Inner Mitochondrial Membrane Morphology.</title>
        <authorList>
            <person name="Hahn A."/>
            <person name="Parey K."/>
            <person name="Bublitz M."/>
            <person name="Mills D.J."/>
            <person name="Zickermann V."/>
            <person name="Vonck J."/>
            <person name="Kuehlbrandt W."/>
            <person name="Meier T."/>
        </authorList>
    </citation>
    <scope>STRUCTURE BY ELECTRON MICROSCOPY (7.7 ANGSTROMS) OF DIMERIC ATP SYNTHASE COMPLEX</scope>
    <scope>FUNCTION</scope>
    <scope>SUBUNIT</scope>
    <scope>SUBCELLULAR LOCATION</scope>
    <scope>IDENTIFICATION BY MASS SPECTROMETRY</scope>
    <scope>ACETYLATION AT SER-2</scope>
</reference>
<sequence>MSATLNVLRWSALGAGVVYGFVHNRTLYSQAEKKVADAKFKKQEKLIEQAKAEWARLHPAPVASTGVVTDISDDKFDIEAYLNHAFPEKA</sequence>
<evidence type="ECO:0000250" key="1">
    <source>
        <dbReference type="UniProtKB" id="P81449"/>
    </source>
</evidence>
<evidence type="ECO:0000255" key="2"/>
<evidence type="ECO:0000269" key="3">
    <source>
    </source>
</evidence>
<evidence type="ECO:0000269" key="4">
    <source>
    </source>
</evidence>
<evidence type="ECO:0000303" key="5">
    <source>
    </source>
</evidence>
<evidence type="ECO:0000305" key="6"/>
<evidence type="ECO:0000305" key="7">
    <source>
    </source>
</evidence>
<evidence type="ECO:0000312" key="8">
    <source>
        <dbReference type="EMBL" id="CAR64348.1"/>
    </source>
</evidence>
<evidence type="ECO:0000312" key="9">
    <source>
        <dbReference type="Proteomes" id="UP000001300"/>
    </source>
</evidence>
<feature type="initiator methionine" description="Removed" evidence="4">
    <location>
        <position position="1"/>
    </location>
</feature>
<feature type="chain" id="PRO_0000445320" description="ATP synthase subunit e, mitochondrial" evidence="6">
    <location>
        <begin position="2"/>
        <end position="90"/>
    </location>
</feature>
<feature type="transmembrane region" description="Helical" evidence="2">
    <location>
        <begin position="7"/>
        <end position="23"/>
    </location>
</feature>
<feature type="modified residue" description="N-acetylserine" evidence="4">
    <location>
        <position position="2"/>
    </location>
</feature>
<comment type="function">
    <text evidence="3 4">Mitochondrial membrane ATP synthase (F(1)F(0) ATP synthase or Complex V) produces ATP from ADP in the presence of a proton gradient across the membrane which is generated by electron transport complexes of the respiratory chain (PubMed:25759169). F-type ATP synthases consist of two structural domains, F(1) - containing the extramembraneous catalytic core, and F(0) - containing the membrane proton channel, linked together by a central stalk and a peripheral stalk (PubMed:27373333). During catalysis, ATP synthesis in the catalytic domain of F(1) is coupled via a rotary mechanism of the central stalk subunits to proton translocation (PubMed:27373333). Part of the complex F(0) domain (PubMed:27373333). Minor subunit located with subunit a/ATP6 in the membrane (PubMed:27373333). Together with subunit g/ATP20, probably contributes to membrane curvature at the site of the ATP synthase dimer, ultimately contributing to formation of cristae (PubMed:27373333).</text>
</comment>
<comment type="subunit">
    <text evidence="3 4">F-type ATP synthases have 2 components, the catalytic core F(1) and the membrane-embedded component F(0), linked together by a central stalk and a peripheral stalk (PubMed:27373333). The central stalk, also called rotor shaft, is often seen as part of F(1) (PubMed:27373333). The peripheral stalk is seen as part of F(0) (PubMed:27373333). F(0) contains the membrane channel next to the rotor (PubMed:27373333). F-type ATP synthases form dimers but each monomer functions independently in ATP generation (PubMed:27373333). The dimer consists of 17 different polypeptides: ATP1 (subunit alpha, 3 molecules per monomer, part of F(1)), ATP2 (subunit beta, 3 copies per monomer, part of F(1)), ATP3 (subunit gamma, part of the central stalk), ATP4 (subunit b, part of the peripheral stalk), ATP5/OSCP (subunit 5/OSCP, part of the peripheral stalk), ATP6 (subunit a, part of the peripheral stalk), ATP7 (subunit d, part of the peripheral stalk), ATP8 (subunit 8, part of the peripheral stalk), OLI1 (subunit c, part of the rotor, 10 molecules per monomer), ATP14 (subunit h, part of the peripheral stalk), ATP15 (subunit epsilon, part of the central stalk), ATP16 (subunit delta, part of the central stalk), ATP17 (subunit f, part of the peripheral stalk), ATP18 (subunit i/j, part of the peripheral stalk), ATP19 (subunit k, dimer-specific, at interface between monomers), ATP20 (subunit g, at interface between monomers), TIM11 (subunit e, at interface between monomers) (PubMed:25759169, PubMed:27373333).</text>
</comment>
<comment type="subcellular location">
    <subcellularLocation>
        <location evidence="7">Mitochondrion inner membrane</location>
        <topology evidence="2">Single-pass membrane protein</topology>
    </subcellularLocation>
    <text evidence="7">The F-type ATP synthase complex is anchored in the mitochondrial inner membrane via the F(0) domain with the F(1) domain and the peripheral stalk extending into the mitochondrial matrix.</text>
</comment>
<comment type="mass spectrometry"/>
<comment type="similarity">
    <text evidence="6">Belongs to the ATPase e subunit family.</text>
</comment>
<keyword id="KW-0007">Acetylation</keyword>
<keyword id="KW-0066">ATP synthesis</keyword>
<keyword id="KW-0138">CF(0)</keyword>
<keyword id="KW-0903">Direct protein sequencing</keyword>
<keyword id="KW-0375">Hydrogen ion transport</keyword>
<keyword id="KW-0406">Ion transport</keyword>
<keyword id="KW-0472">Membrane</keyword>
<keyword id="KW-0496">Mitochondrion</keyword>
<keyword id="KW-0999">Mitochondrion inner membrane</keyword>
<keyword id="KW-1185">Reference proteome</keyword>
<keyword id="KW-0812">Transmembrane</keyword>
<keyword id="KW-1133">Transmembrane helix</keyword>
<keyword id="KW-0813">Transport</keyword>
<name>ATPJ_YARLI</name>
<dbReference type="EMBL" id="CR382131">
    <property type="protein sequence ID" value="CAR64348.1"/>
    <property type="molecule type" value="Genomic_DNA"/>
</dbReference>
<dbReference type="RefSeq" id="XP_002143092.1">
    <property type="nucleotide sequence ID" value="XM_002143056.1"/>
</dbReference>
<dbReference type="SMR" id="B5FVG3"/>
<dbReference type="FunCoup" id="B5FVG3">
    <property type="interactions" value="107"/>
</dbReference>
<dbReference type="STRING" id="284591.B5FVG3"/>
<dbReference type="iPTMnet" id="B5FVG3"/>
<dbReference type="EnsemblFungi" id="CAR64348">
    <property type="protein sequence ID" value="CAR64348"/>
    <property type="gene ID" value="YALI0_E32164g"/>
</dbReference>
<dbReference type="KEGG" id="yli:7009589"/>
<dbReference type="VEuPathDB" id="FungiDB:YALI0_E32164g"/>
<dbReference type="HOGENOM" id="CLU_159435_2_0_1"/>
<dbReference type="InParanoid" id="B5FVG3"/>
<dbReference type="OMA" id="FYGLYHQ"/>
<dbReference type="OrthoDB" id="118556at4891"/>
<dbReference type="Proteomes" id="UP000001300">
    <property type="component" value="Chromosome E"/>
</dbReference>
<dbReference type="GO" id="GO:0005743">
    <property type="term" value="C:mitochondrial inner membrane"/>
    <property type="evidence" value="ECO:0007669"/>
    <property type="project" value="UniProtKB-SubCell"/>
</dbReference>
<dbReference type="GO" id="GO:0045259">
    <property type="term" value="C:proton-transporting ATP synthase complex"/>
    <property type="evidence" value="ECO:0000318"/>
    <property type="project" value="GO_Central"/>
</dbReference>
<dbReference type="GO" id="GO:0015078">
    <property type="term" value="F:proton transmembrane transporter activity"/>
    <property type="evidence" value="ECO:0007669"/>
    <property type="project" value="InterPro"/>
</dbReference>
<dbReference type="GO" id="GO:0015986">
    <property type="term" value="P:proton motive force-driven ATP synthesis"/>
    <property type="evidence" value="ECO:0007669"/>
    <property type="project" value="InterPro"/>
</dbReference>
<dbReference type="InterPro" id="IPR008386">
    <property type="entry name" value="ATP_synth_F0_esu_mt"/>
</dbReference>
<dbReference type="Pfam" id="PF05680">
    <property type="entry name" value="ATP-synt_E"/>
    <property type="match status" value="1"/>
</dbReference>
<proteinExistence type="evidence at protein level"/>
<protein>
    <recommendedName>
        <fullName evidence="1">ATP synthase subunit e, mitochondrial</fullName>
        <shortName evidence="1">ATPase subunit e</shortName>
    </recommendedName>
    <alternativeName>
        <fullName evidence="1">Translocase of the inner membrane protein 11</fullName>
    </alternativeName>
</protein>
<accession>B5FVG3</accession>
<gene>
    <name evidence="1" type="primary">TIM11</name>
    <name evidence="1" type="synonym">ATP21</name>
    <name evidence="8" type="ordered locus">YALI0_E32164g</name>
</gene>